<keyword id="KW-0025">Alternative splicing</keyword>
<keyword id="KW-1015">Disulfide bond</keyword>
<keyword id="KW-0325">Glycoprotein</keyword>
<keyword id="KW-1032">Host cell membrane</keyword>
<keyword id="KW-1043">Host membrane</keyword>
<keyword id="KW-0945">Host-virus interaction</keyword>
<keyword id="KW-0375">Hydrogen ion transport</keyword>
<keyword id="KW-1083">Inhibition of host autophagy by virus</keyword>
<keyword id="KW-0407">Ion channel</keyword>
<keyword id="KW-0406">Ion transport</keyword>
<keyword id="KW-0449">Lipoprotein</keyword>
<keyword id="KW-0472">Membrane</keyword>
<keyword id="KW-0564">Palmitate</keyword>
<keyword id="KW-0597">Phosphoprotein</keyword>
<keyword id="KW-0735">Signal-anchor</keyword>
<keyword id="KW-0812">Transmembrane</keyword>
<keyword id="KW-1133">Transmembrane helix</keyword>
<keyword id="KW-0813">Transport</keyword>
<keyword id="KW-1182">Viral ion channel</keyword>
<keyword id="KW-0946">Virion</keyword>
<evidence type="ECO:0000255" key="1">
    <source>
        <dbReference type="HAMAP-Rule" id="MF_04069"/>
    </source>
</evidence>
<evidence type="ECO:0000256" key="2">
    <source>
        <dbReference type="SAM" id="MobiDB-lite"/>
    </source>
</evidence>
<organismHost>
    <name type="scientific">Aves</name>
    <dbReference type="NCBI Taxonomy" id="8782"/>
</organismHost>
<organismHost>
    <name type="scientific">Homo sapiens</name>
    <name type="common">Human</name>
    <dbReference type="NCBI Taxonomy" id="9606"/>
</organismHost>
<proteinExistence type="inferred from homology"/>
<dbReference type="EMBL" id="M81576">
    <property type="protein sequence ID" value="AAA19194.1"/>
    <property type="molecule type" value="Unassigned_RNA"/>
</dbReference>
<dbReference type="SMR" id="P67866"/>
<dbReference type="GlyCosmos" id="P67866">
    <property type="glycosylation" value="1 site, No reported glycans"/>
</dbReference>
<dbReference type="GO" id="GO:0020002">
    <property type="term" value="C:host cell plasma membrane"/>
    <property type="evidence" value="ECO:0007669"/>
    <property type="project" value="UniProtKB-SubCell"/>
</dbReference>
<dbReference type="GO" id="GO:0016020">
    <property type="term" value="C:membrane"/>
    <property type="evidence" value="ECO:0007669"/>
    <property type="project" value="UniProtKB-UniRule"/>
</dbReference>
<dbReference type="GO" id="GO:0055036">
    <property type="term" value="C:virion membrane"/>
    <property type="evidence" value="ECO:0007669"/>
    <property type="project" value="UniProtKB-SubCell"/>
</dbReference>
<dbReference type="GO" id="GO:0005216">
    <property type="term" value="F:monoatomic ion channel activity"/>
    <property type="evidence" value="ECO:0007669"/>
    <property type="project" value="UniProtKB-UniRule"/>
</dbReference>
<dbReference type="GO" id="GO:0015078">
    <property type="term" value="F:proton transmembrane transporter activity"/>
    <property type="evidence" value="ECO:0007669"/>
    <property type="project" value="UniProtKB-UniRule"/>
</dbReference>
<dbReference type="GO" id="GO:0051259">
    <property type="term" value="P:protein complex oligomerization"/>
    <property type="evidence" value="ECO:0007669"/>
    <property type="project" value="UniProtKB-UniRule"/>
</dbReference>
<dbReference type="GO" id="GO:0044694">
    <property type="term" value="P:symbiont genome entry into host cell via pore formation in plasma membrane"/>
    <property type="evidence" value="ECO:0007669"/>
    <property type="project" value="UniProtKB-UniRule"/>
</dbReference>
<dbReference type="GO" id="GO:0140321">
    <property type="term" value="P:symbiont-mediated suppression of host autophagy"/>
    <property type="evidence" value="ECO:0007669"/>
    <property type="project" value="UniProtKB-KW"/>
</dbReference>
<dbReference type="Gene3D" id="6.10.250.1640">
    <property type="match status" value="1"/>
</dbReference>
<dbReference type="HAMAP" id="MF_04069">
    <property type="entry name" value="INFV_M2"/>
    <property type="match status" value="1"/>
</dbReference>
<dbReference type="InterPro" id="IPR002089">
    <property type="entry name" value="Flu_M2"/>
</dbReference>
<dbReference type="Pfam" id="PF00599">
    <property type="entry name" value="Flu_M2"/>
    <property type="match status" value="1"/>
</dbReference>
<comment type="function">
    <text evidence="1">Forms a proton-selective ion channel that is necessary for the efficient release of the viral genome during virus entry. After attaching to the cell surface, the virion enters the cell by endocytosis. Acidification of the endosome triggers M2 ion channel activity. The influx of protons into virion interior is believed to disrupt interactions between the viral ribonucleoprotein (RNP), matrix protein 1 (M1), and lipid bilayers, thereby freeing the viral genome from interaction with viral proteins and enabling RNA segments to migrate to the host cell nucleus, where influenza virus RNA transcription and replication occur. Also plays a role in viral proteins secretory pathway. Elevates the intravesicular pH of normally acidic compartments, such as trans-Golgi network, preventing newly formed hemagglutinin from premature switching to the fusion-active conformation.</text>
</comment>
<comment type="activity regulation">
    <text>The M2 protein from most influenza A strains is inhibited by amantadine and rimantadine, resulting in viral uncoating incapacity. Emergence of amantadine-resistant variants is usually rapid.</text>
</comment>
<comment type="subunit">
    <text evidence="1">Homotetramer; composed of two disulfide-linked dimers held together by non-covalent interactions. May interact with matrix protein 1.</text>
</comment>
<comment type="subcellular location">
    <subcellularLocation>
        <location evidence="1">Virion membrane</location>
    </subcellularLocation>
    <subcellularLocation>
        <location evidence="1">Host apical cell membrane</location>
        <topology evidence="1">Single-pass type III membrane protein</topology>
    </subcellularLocation>
    <text evidence="1">Abundantly expressed at the apical plasma membrane in infected polarized epithelial cells, in close proximity to budding and assembled virions. Minor component of virions (only 16-20 molecules/virion).</text>
</comment>
<comment type="alternative products">
    <event type="alternative splicing"/>
    <isoform>
        <id>P67866-1</id>
        <id>P26130-1</id>
        <name>M2</name>
        <sequence type="displayed"/>
    </isoform>
    <isoform>
        <id>P67864-1</id>
        <id>P26128-1</id>
        <name>M1</name>
        <sequence type="external"/>
    </isoform>
    <text>Only the first 9 residues are shared by the 2 isoforms.</text>
</comment>
<comment type="domain">
    <text evidence="1">Cytoplasmic tail plays an important role in virion assembly and morphogenesis.</text>
</comment>
<comment type="miscellaneous">
    <text evidence="1">When the channel is activated, one or more imidazole moieties of His-37 probably become bi-protonated.</text>
</comment>
<comment type="similarity">
    <text evidence="1">Belongs to the influenza viruses matrix protein M2 family.</text>
</comment>
<accession>P67866</accession>
<accession>P26130</accession>
<organism>
    <name type="scientific">Influenza A virus (strain A/Leningrad/134/17/1957 H2N2)</name>
    <dbReference type="NCBI Taxonomy" id="380984"/>
    <lineage>
        <taxon>Viruses</taxon>
        <taxon>Riboviria</taxon>
        <taxon>Orthornavirae</taxon>
        <taxon>Negarnaviricota</taxon>
        <taxon>Polyploviricotina</taxon>
        <taxon>Insthoviricetes</taxon>
        <taxon>Articulavirales</taxon>
        <taxon>Orthomyxoviridae</taxon>
        <taxon>Alphainfluenzavirus</taxon>
        <taxon>Alphainfluenzavirus influenzae</taxon>
        <taxon>Influenza A virus</taxon>
    </lineage>
</organism>
<sequence>MSLLTEVETPIRNEWGCRCNDSSDPLVVAASIIGILHLILWILDRLFFKCNYRFFKHGLKRGASTEGVPESMREEYRKEQQSAVDTDDSHFVSIELE</sequence>
<reference key="1">
    <citation type="journal article" date="1992" name="Virology">
        <title>Sequence changes in the live attenuated, cold-adapted variants of influenza A/Leningrad/134/57 (H2N2) virus.</title>
        <authorList>
            <person name="Klimov A.I."/>
            <person name="Cox N.J."/>
            <person name="Yotov W.V."/>
            <person name="Rocha E."/>
            <person name="Alexandrova G.I."/>
            <person name="Kendal A.P."/>
        </authorList>
    </citation>
    <scope>NUCLEOTIDE SEQUENCE</scope>
</reference>
<reference key="2">
    <citation type="journal article" date="2004" name="Virus Res.">
        <title>Assembly and budding of influenza virus.</title>
        <authorList>
            <person name="Nayak D.P."/>
            <person name="Hui E.K."/>
            <person name="Barman S."/>
        </authorList>
    </citation>
    <scope>REVIEW</scope>
</reference>
<reference key="3">
    <citation type="journal article" date="2003" name="FEBS Lett.">
        <title>Proton conduction through the M2 protein of the influenza A virus; a quantitative, mechanistic analysis of experimental data.</title>
        <authorList>
            <person name="Lear J.D."/>
        </authorList>
    </citation>
    <scope>REVIEW</scope>
</reference>
<reference key="4">
    <citation type="journal article" date="2003" name="FEBS Lett.">
        <title>Computational studies of proton transport through the M2 channel.</title>
        <authorList>
            <person name="Wu Y."/>
            <person name="Voth G.A."/>
        </authorList>
    </citation>
    <scope>REVIEW</scope>
</reference>
<name>M2_I57A2</name>
<protein>
    <recommendedName>
        <fullName evidence="1">Matrix protein 2</fullName>
    </recommendedName>
    <alternativeName>
        <fullName evidence="1">Proton channel protein M2</fullName>
    </alternativeName>
</protein>
<gene>
    <name evidence="1" type="primary">M</name>
</gene>
<feature type="chain" id="PRO_0000078886" description="Matrix protein 2">
    <location>
        <begin position="1"/>
        <end position="97"/>
    </location>
</feature>
<feature type="topological domain" description="Virion surface" evidence="1">
    <location>
        <begin position="1"/>
        <end position="22"/>
    </location>
</feature>
<feature type="transmembrane region" description="Helical; Signal-anchor for type III membrane protein" evidence="1">
    <location>
        <begin position="23"/>
        <end position="43"/>
    </location>
</feature>
<feature type="topological domain" description="Intravirion" evidence="1">
    <location>
        <begin position="44"/>
        <end position="97"/>
    </location>
</feature>
<feature type="region of interest" description="Disordered" evidence="2">
    <location>
        <begin position="62"/>
        <end position="89"/>
    </location>
</feature>
<feature type="compositionally biased region" description="Basic and acidic residues" evidence="2">
    <location>
        <begin position="71"/>
        <end position="80"/>
    </location>
</feature>
<feature type="site" description="Essential for channel activity, possibly by being protonated during channel activation, and by forming the channel gate and the selective filter" evidence="1">
    <location>
        <position position="37"/>
    </location>
</feature>
<feature type="site" description="Seems to be involved in pH gating" evidence="1">
    <location>
        <position position="41"/>
    </location>
</feature>
<feature type="modified residue" description="Phosphoserine; by host" evidence="1">
    <location>
        <position position="64"/>
    </location>
</feature>
<feature type="modified residue" description="Phosphoserine; by host" evidence="1">
    <location>
        <position position="82"/>
    </location>
</feature>
<feature type="modified residue" description="Phosphoserine; by host" evidence="1">
    <location>
        <position position="93"/>
    </location>
</feature>
<feature type="lipid moiety-binding region" description="S-palmitoyl cysteine; by host" evidence="1">
    <location>
        <position position="50"/>
    </location>
</feature>
<feature type="glycosylation site" description="N-linked (GlcNAc...) asparagine; by host" evidence="1">
    <location>
        <position position="20"/>
    </location>
</feature>
<feature type="disulfide bond" description="Interchain (with C-17)" evidence="1">
    <location>
        <position position="17"/>
    </location>
</feature>
<feature type="disulfide bond" description="Interchain (with C-19)" evidence="1">
    <location>
        <position position="19"/>
    </location>
</feature>